<reference key="1">
    <citation type="journal article" date="2006" name="Genome Biol.">
        <title>Genomic analysis reveals that Pseudomonas aeruginosa virulence is combinatorial.</title>
        <authorList>
            <person name="Lee D.G."/>
            <person name="Urbach J.M."/>
            <person name="Wu G."/>
            <person name="Liberati N.T."/>
            <person name="Feinbaum R.L."/>
            <person name="Miyata S."/>
            <person name="Diggins L.T."/>
            <person name="He J."/>
            <person name="Saucier M."/>
            <person name="Deziel E."/>
            <person name="Friedman L."/>
            <person name="Li L."/>
            <person name="Grills G."/>
            <person name="Montgomery K."/>
            <person name="Kucherlapati R."/>
            <person name="Rahme L.G."/>
            <person name="Ausubel F.M."/>
        </authorList>
    </citation>
    <scope>NUCLEOTIDE SEQUENCE [LARGE SCALE GENOMIC DNA]</scope>
    <source>
        <strain>UCBPP-PA14</strain>
    </source>
</reference>
<sequence length="148" mass="16697">MTDKEQVVIYTDGACKGNPGRGGWGALLLYKGAERELWGGEPDTTNNRMELMAAIQALAALKRSCPIRLITDSEYVMRGITEWLPNWKKRGWKTASKQPVKNADLWQALDEQVARHQVEWQWVRGHTGDPGNERADQLANRGVAELPR</sequence>
<name>RNH_PSEAB</name>
<protein>
    <recommendedName>
        <fullName evidence="1">Ribonuclease H</fullName>
        <shortName evidence="1">RNase H</shortName>
        <ecNumber evidence="1">3.1.26.4</ecNumber>
    </recommendedName>
</protein>
<comment type="function">
    <text evidence="1">Endonuclease that specifically degrades the RNA of RNA-DNA hybrids.</text>
</comment>
<comment type="catalytic activity">
    <reaction evidence="1">
        <text>Endonucleolytic cleavage to 5'-phosphomonoester.</text>
        <dbReference type="EC" id="3.1.26.4"/>
    </reaction>
</comment>
<comment type="cofactor">
    <cofactor evidence="1">
        <name>Mg(2+)</name>
        <dbReference type="ChEBI" id="CHEBI:18420"/>
    </cofactor>
    <text evidence="1">Binds 1 Mg(2+) ion per subunit. May bind a second metal ion at a regulatory site, or after substrate binding.</text>
</comment>
<comment type="subunit">
    <text evidence="1">Monomer.</text>
</comment>
<comment type="subcellular location">
    <subcellularLocation>
        <location evidence="1">Cytoplasm</location>
    </subcellularLocation>
</comment>
<comment type="similarity">
    <text evidence="1">Belongs to the RNase H family.</text>
</comment>
<dbReference type="EC" id="3.1.26.4" evidence="1"/>
<dbReference type="EMBL" id="CP000438">
    <property type="protein sequence ID" value="ABJ11001.1"/>
    <property type="molecule type" value="Genomic_DNA"/>
</dbReference>
<dbReference type="RefSeq" id="WP_003087954.1">
    <property type="nucleotide sequence ID" value="NZ_CP034244.1"/>
</dbReference>
<dbReference type="SMR" id="Q02KV8"/>
<dbReference type="KEGG" id="pau:PA14_41060"/>
<dbReference type="PseudoCAP" id="PA14_41060"/>
<dbReference type="HOGENOM" id="CLU_030894_6_0_6"/>
<dbReference type="BioCyc" id="PAER208963:G1G74-3438-MONOMER"/>
<dbReference type="Proteomes" id="UP000000653">
    <property type="component" value="Chromosome"/>
</dbReference>
<dbReference type="GO" id="GO:0005737">
    <property type="term" value="C:cytoplasm"/>
    <property type="evidence" value="ECO:0007669"/>
    <property type="project" value="UniProtKB-SubCell"/>
</dbReference>
<dbReference type="GO" id="GO:0000287">
    <property type="term" value="F:magnesium ion binding"/>
    <property type="evidence" value="ECO:0007669"/>
    <property type="project" value="UniProtKB-UniRule"/>
</dbReference>
<dbReference type="GO" id="GO:0003676">
    <property type="term" value="F:nucleic acid binding"/>
    <property type="evidence" value="ECO:0007669"/>
    <property type="project" value="InterPro"/>
</dbReference>
<dbReference type="GO" id="GO:0004523">
    <property type="term" value="F:RNA-DNA hybrid ribonuclease activity"/>
    <property type="evidence" value="ECO:0007669"/>
    <property type="project" value="UniProtKB-UniRule"/>
</dbReference>
<dbReference type="GO" id="GO:0043137">
    <property type="term" value="P:DNA replication, removal of RNA primer"/>
    <property type="evidence" value="ECO:0007669"/>
    <property type="project" value="TreeGrafter"/>
</dbReference>
<dbReference type="CDD" id="cd09278">
    <property type="entry name" value="RNase_HI_prokaryote_like"/>
    <property type="match status" value="1"/>
</dbReference>
<dbReference type="FunFam" id="3.30.420.10:FF:000119">
    <property type="entry name" value="Ribonuclease H"/>
    <property type="match status" value="1"/>
</dbReference>
<dbReference type="Gene3D" id="3.30.420.10">
    <property type="entry name" value="Ribonuclease H-like superfamily/Ribonuclease H"/>
    <property type="match status" value="1"/>
</dbReference>
<dbReference type="HAMAP" id="MF_00042">
    <property type="entry name" value="RNase_H"/>
    <property type="match status" value="1"/>
</dbReference>
<dbReference type="InterPro" id="IPR050092">
    <property type="entry name" value="RNase_H"/>
</dbReference>
<dbReference type="InterPro" id="IPR012337">
    <property type="entry name" value="RNaseH-like_sf"/>
</dbReference>
<dbReference type="InterPro" id="IPR002156">
    <property type="entry name" value="RNaseH_domain"/>
</dbReference>
<dbReference type="InterPro" id="IPR036397">
    <property type="entry name" value="RNaseH_sf"/>
</dbReference>
<dbReference type="InterPro" id="IPR022892">
    <property type="entry name" value="RNaseHI"/>
</dbReference>
<dbReference type="NCBIfam" id="NF001236">
    <property type="entry name" value="PRK00203.1"/>
    <property type="match status" value="1"/>
</dbReference>
<dbReference type="PANTHER" id="PTHR10642">
    <property type="entry name" value="RIBONUCLEASE H1"/>
    <property type="match status" value="1"/>
</dbReference>
<dbReference type="PANTHER" id="PTHR10642:SF26">
    <property type="entry name" value="RIBONUCLEASE H1"/>
    <property type="match status" value="1"/>
</dbReference>
<dbReference type="Pfam" id="PF00075">
    <property type="entry name" value="RNase_H"/>
    <property type="match status" value="1"/>
</dbReference>
<dbReference type="SUPFAM" id="SSF53098">
    <property type="entry name" value="Ribonuclease H-like"/>
    <property type="match status" value="1"/>
</dbReference>
<dbReference type="PROSITE" id="PS50879">
    <property type="entry name" value="RNASE_H_1"/>
    <property type="match status" value="1"/>
</dbReference>
<keyword id="KW-0963">Cytoplasm</keyword>
<keyword id="KW-0255">Endonuclease</keyword>
<keyword id="KW-0378">Hydrolase</keyword>
<keyword id="KW-0460">Magnesium</keyword>
<keyword id="KW-0479">Metal-binding</keyword>
<keyword id="KW-0540">Nuclease</keyword>
<organism>
    <name type="scientific">Pseudomonas aeruginosa (strain UCBPP-PA14)</name>
    <dbReference type="NCBI Taxonomy" id="208963"/>
    <lineage>
        <taxon>Bacteria</taxon>
        <taxon>Pseudomonadati</taxon>
        <taxon>Pseudomonadota</taxon>
        <taxon>Gammaproteobacteria</taxon>
        <taxon>Pseudomonadales</taxon>
        <taxon>Pseudomonadaceae</taxon>
        <taxon>Pseudomonas</taxon>
    </lineage>
</organism>
<accession>Q02KV8</accession>
<evidence type="ECO:0000255" key="1">
    <source>
        <dbReference type="HAMAP-Rule" id="MF_00042"/>
    </source>
</evidence>
<evidence type="ECO:0000255" key="2">
    <source>
        <dbReference type="PROSITE-ProRule" id="PRU00408"/>
    </source>
</evidence>
<evidence type="ECO:0000256" key="3">
    <source>
        <dbReference type="SAM" id="MobiDB-lite"/>
    </source>
</evidence>
<gene>
    <name evidence="1" type="primary">rnhA</name>
    <name type="ordered locus">PA14_41060</name>
</gene>
<feature type="chain" id="PRO_1000074653" description="Ribonuclease H">
    <location>
        <begin position="1"/>
        <end position="148"/>
    </location>
</feature>
<feature type="domain" description="RNase H type-1" evidence="2">
    <location>
        <begin position="3"/>
        <end position="144"/>
    </location>
</feature>
<feature type="region of interest" description="Disordered" evidence="3">
    <location>
        <begin position="125"/>
        <end position="148"/>
    </location>
</feature>
<feature type="binding site" evidence="1">
    <location>
        <position position="12"/>
    </location>
    <ligand>
        <name>Mg(2+)</name>
        <dbReference type="ChEBI" id="CHEBI:18420"/>
        <label>1</label>
    </ligand>
</feature>
<feature type="binding site" evidence="1">
    <location>
        <position position="12"/>
    </location>
    <ligand>
        <name>Mg(2+)</name>
        <dbReference type="ChEBI" id="CHEBI:18420"/>
        <label>2</label>
    </ligand>
</feature>
<feature type="binding site" evidence="1">
    <location>
        <position position="50"/>
    </location>
    <ligand>
        <name>Mg(2+)</name>
        <dbReference type="ChEBI" id="CHEBI:18420"/>
        <label>1</label>
    </ligand>
</feature>
<feature type="binding site" evidence="1">
    <location>
        <position position="72"/>
    </location>
    <ligand>
        <name>Mg(2+)</name>
        <dbReference type="ChEBI" id="CHEBI:18420"/>
        <label>1</label>
    </ligand>
</feature>
<feature type="binding site" evidence="1">
    <location>
        <position position="136"/>
    </location>
    <ligand>
        <name>Mg(2+)</name>
        <dbReference type="ChEBI" id="CHEBI:18420"/>
        <label>2</label>
    </ligand>
</feature>
<proteinExistence type="inferred from homology"/>